<organism>
    <name type="scientific">Canine adenovirus serotype 2 (strain Toronto A 26-61)</name>
    <name type="common">CAdV-2</name>
    <name type="synonym">Canine adenovirus 2 (strain Toronto A 26-61)</name>
    <dbReference type="NCBI Taxonomy" id="69152"/>
    <lineage>
        <taxon>Viruses</taxon>
        <taxon>Varidnaviria</taxon>
        <taxon>Bamfordvirae</taxon>
        <taxon>Preplasmiviricota</taxon>
        <taxon>Tectiliviricetes</taxon>
        <taxon>Rowavirales</taxon>
        <taxon>Adenoviridae</taxon>
        <taxon>Mastadenovirus</taxon>
        <taxon>Canine mastadenovirus A</taxon>
    </lineage>
</organism>
<dbReference type="EMBL" id="U77082">
    <property type="protein sequence ID" value="AAB38715.1"/>
    <property type="molecule type" value="Genomic_DNA"/>
</dbReference>
<dbReference type="RefSeq" id="AP_000612.1">
    <property type="nucleotide sequence ID" value="AC_000020.1"/>
</dbReference>
<dbReference type="Proteomes" id="UP000118097">
    <property type="component" value="Segment"/>
</dbReference>
<dbReference type="GO" id="GO:0044196">
    <property type="term" value="C:host cell nucleolus"/>
    <property type="evidence" value="ECO:0007669"/>
    <property type="project" value="UniProtKB-SubCell"/>
</dbReference>
<dbReference type="GO" id="GO:0044095">
    <property type="term" value="C:host cell nucleoplasm"/>
    <property type="evidence" value="ECO:0007669"/>
    <property type="project" value="UniProtKB-SubCell"/>
</dbReference>
<dbReference type="GO" id="GO:0044423">
    <property type="term" value="C:virion component"/>
    <property type="evidence" value="ECO:0007669"/>
    <property type="project" value="UniProtKB-UniRule"/>
</dbReference>
<dbReference type="GO" id="GO:0005524">
    <property type="term" value="F:ATP binding"/>
    <property type="evidence" value="ECO:0007669"/>
    <property type="project" value="UniProtKB-UniRule"/>
</dbReference>
<dbReference type="GO" id="GO:0003677">
    <property type="term" value="F:DNA binding"/>
    <property type="evidence" value="ECO:0007669"/>
    <property type="project" value="UniProtKB-UniRule"/>
</dbReference>
<dbReference type="GO" id="GO:0006351">
    <property type="term" value="P:DNA-templated transcription"/>
    <property type="evidence" value="ECO:0007669"/>
    <property type="project" value="UniProtKB-UniRule"/>
</dbReference>
<dbReference type="GO" id="GO:0039708">
    <property type="term" value="P:nuclear capsid assembly"/>
    <property type="evidence" value="ECO:0007669"/>
    <property type="project" value="UniProtKB-UniRule"/>
</dbReference>
<dbReference type="GO" id="GO:0006355">
    <property type="term" value="P:regulation of DNA-templated transcription"/>
    <property type="evidence" value="ECO:0007669"/>
    <property type="project" value="UniProtKB-UniRule"/>
</dbReference>
<dbReference type="GO" id="GO:0098035">
    <property type="term" value="P:viral DNA genome packaging via site-specific sequence recognition"/>
    <property type="evidence" value="ECO:0007669"/>
    <property type="project" value="UniProtKB-UniRule"/>
</dbReference>
<dbReference type="GO" id="GO:0019076">
    <property type="term" value="P:viral release from host cell"/>
    <property type="evidence" value="ECO:0007669"/>
    <property type="project" value="UniProtKB-UniRule"/>
</dbReference>
<dbReference type="GO" id="GO:0019083">
    <property type="term" value="P:viral transcription"/>
    <property type="evidence" value="ECO:0007669"/>
    <property type="project" value="UniProtKB-UniRule"/>
</dbReference>
<dbReference type="HAMAP" id="MF_04057">
    <property type="entry name" value="ADV_PKG1"/>
    <property type="match status" value="1"/>
</dbReference>
<dbReference type="InterPro" id="IPR003389">
    <property type="entry name" value="Adeno_IVa2"/>
</dbReference>
<dbReference type="InterPro" id="IPR027417">
    <property type="entry name" value="P-loop_NTPase"/>
</dbReference>
<dbReference type="Pfam" id="PF02456">
    <property type="entry name" value="Adeno_IVa2"/>
    <property type="match status" value="1"/>
</dbReference>
<dbReference type="SUPFAM" id="SSF52540">
    <property type="entry name" value="P-loop containing nucleoside triphosphate hydrolases"/>
    <property type="match status" value="1"/>
</dbReference>
<feature type="chain" id="PRO_0000221890" description="Packaging protein 1">
    <location>
        <begin position="1"/>
        <end position="446"/>
    </location>
</feature>
<feature type="region of interest" description="Disordered" evidence="2">
    <location>
        <begin position="1"/>
        <end position="71"/>
    </location>
</feature>
<feature type="region of interest" description="DNA-binding" evidence="1">
    <location>
        <begin position="439"/>
        <end position="446"/>
    </location>
</feature>
<feature type="compositionally biased region" description="Basic and acidic residues" evidence="2">
    <location>
        <begin position="31"/>
        <end position="43"/>
    </location>
</feature>
<feature type="binding site" evidence="1">
    <location>
        <begin position="170"/>
        <end position="177"/>
    </location>
    <ligand>
        <name>ATP</name>
        <dbReference type="ChEBI" id="CHEBI:30616"/>
    </ligand>
</feature>
<comment type="function">
    <text evidence="1">Component of the packaging machinery which encapsidates the viral DNA into preformed capsids and transcriptional activator of the viral major late promoter (MLP). Binds, along with packaging proteins 2 and 3, to the specific packaging sequence on the left end of viral genomic DNA and displays ATPase activity thereby providing the power stroke of the packaging machinery. The activity of packaging protein IVa2 is stimulated by protein 33K which acts as a terminase. May be the protein that pumps DNA into the capsid powered by ATP hydrolysis. Specifically binds to the 5'-CG-3' nucleotides of the repeats making up the packaging sequence. Component of the DEF-A and DEF-B transcription factors that bind downstream elements of the major late promoter (MLP), and stimulate transcription from the MLP after initiation of viral DNA replication. DEF-A is a heterodimer packaging proteins 1 and 2 and DEF-B is a homodimer of packaging protein 1.</text>
</comment>
<comment type="subunit">
    <text evidence="1">Homodimer. Part of a genome packaging complex composed of packaging proteins 1, 2 and 3; this complex specifically binds to the packaging sequence on the left end of viral genomic DNA and performs packaging of the viral genome. Interacts with protein 33K.</text>
</comment>
<comment type="subcellular location">
    <subcellularLocation>
        <location evidence="1">Virion</location>
    </subcellularLocation>
    <subcellularLocation>
        <location evidence="1">Host nucleus</location>
        <location evidence="1">Host nucleoplasm</location>
    </subcellularLocation>
    <subcellularLocation>
        <location evidence="1">Host nucleus</location>
        <location evidence="1">Host nucleolus</location>
    </subcellularLocation>
    <text evidence="1">Located at a unique vertex of the capsid. Present in about 6-8 copies per virion.</text>
</comment>
<comment type="induction">
    <text evidence="1">Expressed in the intermediate phase of the viral replicative cycle.</text>
</comment>
<comment type="similarity">
    <text evidence="1">Belongs to the adenoviridae packaging protein 1 family.</text>
</comment>
<name>PKG1_ADECT</name>
<gene>
    <name evidence="1" type="primary">IVa2</name>
</gene>
<proteinExistence type="inferred from homology"/>
<sequence length="446" mass="50392">MEEKAGLGRLQNQQDEPAQDPHQRAGPRATFHSDRNHPNKEAEAMEGQNPACSRHASSHSIQPQASKPKKHRNYLDGAAVDDLKSLWDRLQTLQQSLTNMPYAEGLKPLKNFASFEELLSMGGDSLLNDLLDIQDSITQCCMKVSKYLNKDGSCASLNYYKQPFIAAVYGPTGCGKSQLLRNLMSAQLIVPAPETVFFITPQVDMIPPQEIAAWETQICEGNFLAGPENTVVPQSGSIMPKFVQMSYAELTNEANYDVTNPTNVFARAASKGPLAIVMDECMEDLGGNRGIAKFFHAFPSKLLDRFPKCTGYSVIVVLHNMNPRRDQGGNIANLKIQAKMHIISPKVHPSQLNRFINIYTKGQPTAISLLLKDIFNYHRLNTNFDWIVYNTEPIDNCMHWLYLSPDEGLIPMYLNIQAKVYQAMERIHRTITDRQRWTRYYHSKKK</sequence>
<evidence type="ECO:0000255" key="1">
    <source>
        <dbReference type="HAMAP-Rule" id="MF_04057"/>
    </source>
</evidence>
<evidence type="ECO:0000256" key="2">
    <source>
        <dbReference type="SAM" id="MobiDB-lite"/>
    </source>
</evidence>
<protein>
    <recommendedName>
        <fullName evidence="1">Packaging protein 1</fullName>
    </recommendedName>
    <alternativeName>
        <fullName evidence="1">Packaging protein IVa2</fullName>
    </alternativeName>
</protein>
<organismHost>
    <name type="scientific">Canis lupus familiaris</name>
    <name type="common">Dog</name>
    <name type="synonym">Canis familiaris</name>
    <dbReference type="NCBI Taxonomy" id="9615"/>
</organismHost>
<accession>P87552</accession>
<reference key="1">
    <citation type="submission" date="1996-11" db="EMBL/GenBank/DDBJ databases">
        <title>Complete DNA sequence and genomic organization of canine adenovirus type 2.</title>
        <authorList>
            <person name="Campbell J.B."/>
            <person name="Zhao Y."/>
        </authorList>
    </citation>
    <scope>NUCLEOTIDE SEQUENCE [LARGE SCALE GENOMIC DNA]</scope>
</reference>
<keyword id="KW-0010">Activator</keyword>
<keyword id="KW-0067">ATP-binding</keyword>
<keyword id="KW-0238">DNA-binding</keyword>
<keyword id="KW-1048">Host nucleus</keyword>
<keyword id="KW-0547">Nucleotide-binding</keyword>
<keyword id="KW-0597">Phosphoprotein</keyword>
<keyword id="KW-1185">Reference proteome</keyword>
<keyword id="KW-0804">Transcription</keyword>
<keyword id="KW-0805">Transcription regulation</keyword>
<keyword id="KW-0231">Viral genome packaging</keyword>
<keyword id="KW-1188">Viral release from host cell</keyword>
<keyword id="KW-0946">Virion</keyword>